<organism>
    <name type="scientific">Staphylococcus carnosus (strain TM300)</name>
    <dbReference type="NCBI Taxonomy" id="396513"/>
    <lineage>
        <taxon>Bacteria</taxon>
        <taxon>Bacillati</taxon>
        <taxon>Bacillota</taxon>
        <taxon>Bacilli</taxon>
        <taxon>Bacillales</taxon>
        <taxon>Staphylococcaceae</taxon>
        <taxon>Staphylococcus</taxon>
    </lineage>
</organism>
<protein>
    <recommendedName>
        <fullName evidence="1">CTP synthase</fullName>
        <ecNumber evidence="1">6.3.4.2</ecNumber>
    </recommendedName>
    <alternativeName>
        <fullName evidence="1">Cytidine 5'-triphosphate synthase</fullName>
    </alternativeName>
    <alternativeName>
        <fullName evidence="1">Cytidine triphosphate synthetase</fullName>
        <shortName evidence="1">CTP synthetase</shortName>
        <shortName evidence="1">CTPS</shortName>
    </alternativeName>
    <alternativeName>
        <fullName evidence="1">UTP--ammonia ligase</fullName>
    </alternativeName>
</protein>
<dbReference type="EC" id="6.3.4.2" evidence="1"/>
<dbReference type="EMBL" id="AM295250">
    <property type="protein sequence ID" value="CAL28536.1"/>
    <property type="molecule type" value="Genomic_DNA"/>
</dbReference>
<dbReference type="RefSeq" id="WP_015900876.1">
    <property type="nucleotide sequence ID" value="NC_012121.1"/>
</dbReference>
<dbReference type="SMR" id="B9DME0"/>
<dbReference type="MEROPS" id="C26.964"/>
<dbReference type="GeneID" id="93794084"/>
<dbReference type="KEGG" id="sca:SCA_1630"/>
<dbReference type="eggNOG" id="COG0504">
    <property type="taxonomic scope" value="Bacteria"/>
</dbReference>
<dbReference type="HOGENOM" id="CLU_011675_5_0_9"/>
<dbReference type="OrthoDB" id="9801107at2"/>
<dbReference type="BioCyc" id="SCAR396513:SCA_RS08280-MONOMER"/>
<dbReference type="UniPathway" id="UPA00159">
    <property type="reaction ID" value="UER00277"/>
</dbReference>
<dbReference type="Proteomes" id="UP000000444">
    <property type="component" value="Chromosome"/>
</dbReference>
<dbReference type="GO" id="GO:0005829">
    <property type="term" value="C:cytosol"/>
    <property type="evidence" value="ECO:0007669"/>
    <property type="project" value="TreeGrafter"/>
</dbReference>
<dbReference type="GO" id="GO:0005524">
    <property type="term" value="F:ATP binding"/>
    <property type="evidence" value="ECO:0007669"/>
    <property type="project" value="UniProtKB-KW"/>
</dbReference>
<dbReference type="GO" id="GO:0003883">
    <property type="term" value="F:CTP synthase activity"/>
    <property type="evidence" value="ECO:0007669"/>
    <property type="project" value="UniProtKB-UniRule"/>
</dbReference>
<dbReference type="GO" id="GO:0004359">
    <property type="term" value="F:glutaminase activity"/>
    <property type="evidence" value="ECO:0007669"/>
    <property type="project" value="RHEA"/>
</dbReference>
<dbReference type="GO" id="GO:0042802">
    <property type="term" value="F:identical protein binding"/>
    <property type="evidence" value="ECO:0007669"/>
    <property type="project" value="TreeGrafter"/>
</dbReference>
<dbReference type="GO" id="GO:0046872">
    <property type="term" value="F:metal ion binding"/>
    <property type="evidence" value="ECO:0007669"/>
    <property type="project" value="UniProtKB-KW"/>
</dbReference>
<dbReference type="GO" id="GO:0044210">
    <property type="term" value="P:'de novo' CTP biosynthetic process"/>
    <property type="evidence" value="ECO:0007669"/>
    <property type="project" value="UniProtKB-UniRule"/>
</dbReference>
<dbReference type="GO" id="GO:0019856">
    <property type="term" value="P:pyrimidine nucleobase biosynthetic process"/>
    <property type="evidence" value="ECO:0007669"/>
    <property type="project" value="TreeGrafter"/>
</dbReference>
<dbReference type="CDD" id="cd03113">
    <property type="entry name" value="CTPS_N"/>
    <property type="match status" value="1"/>
</dbReference>
<dbReference type="CDD" id="cd01746">
    <property type="entry name" value="GATase1_CTP_Synthase"/>
    <property type="match status" value="1"/>
</dbReference>
<dbReference type="FunFam" id="3.40.50.300:FF:000009">
    <property type="entry name" value="CTP synthase"/>
    <property type="match status" value="1"/>
</dbReference>
<dbReference type="FunFam" id="3.40.50.880:FF:000002">
    <property type="entry name" value="CTP synthase"/>
    <property type="match status" value="1"/>
</dbReference>
<dbReference type="Gene3D" id="3.40.50.880">
    <property type="match status" value="1"/>
</dbReference>
<dbReference type="Gene3D" id="3.40.50.300">
    <property type="entry name" value="P-loop containing nucleotide triphosphate hydrolases"/>
    <property type="match status" value="1"/>
</dbReference>
<dbReference type="HAMAP" id="MF_01227">
    <property type="entry name" value="PyrG"/>
    <property type="match status" value="1"/>
</dbReference>
<dbReference type="InterPro" id="IPR029062">
    <property type="entry name" value="Class_I_gatase-like"/>
</dbReference>
<dbReference type="InterPro" id="IPR004468">
    <property type="entry name" value="CTP_synthase"/>
</dbReference>
<dbReference type="InterPro" id="IPR017456">
    <property type="entry name" value="CTP_synthase_N"/>
</dbReference>
<dbReference type="InterPro" id="IPR017926">
    <property type="entry name" value="GATASE"/>
</dbReference>
<dbReference type="InterPro" id="IPR033828">
    <property type="entry name" value="GATase1_CTP_Synthase"/>
</dbReference>
<dbReference type="InterPro" id="IPR027417">
    <property type="entry name" value="P-loop_NTPase"/>
</dbReference>
<dbReference type="NCBIfam" id="NF003792">
    <property type="entry name" value="PRK05380.1"/>
    <property type="match status" value="1"/>
</dbReference>
<dbReference type="NCBIfam" id="TIGR00337">
    <property type="entry name" value="PyrG"/>
    <property type="match status" value="1"/>
</dbReference>
<dbReference type="PANTHER" id="PTHR11550">
    <property type="entry name" value="CTP SYNTHASE"/>
    <property type="match status" value="1"/>
</dbReference>
<dbReference type="PANTHER" id="PTHR11550:SF0">
    <property type="entry name" value="CTP SYNTHASE-RELATED"/>
    <property type="match status" value="1"/>
</dbReference>
<dbReference type="Pfam" id="PF06418">
    <property type="entry name" value="CTP_synth_N"/>
    <property type="match status" value="1"/>
</dbReference>
<dbReference type="Pfam" id="PF00117">
    <property type="entry name" value="GATase"/>
    <property type="match status" value="1"/>
</dbReference>
<dbReference type="SUPFAM" id="SSF52317">
    <property type="entry name" value="Class I glutamine amidotransferase-like"/>
    <property type="match status" value="1"/>
</dbReference>
<dbReference type="SUPFAM" id="SSF52540">
    <property type="entry name" value="P-loop containing nucleoside triphosphate hydrolases"/>
    <property type="match status" value="1"/>
</dbReference>
<dbReference type="PROSITE" id="PS51273">
    <property type="entry name" value="GATASE_TYPE_1"/>
    <property type="match status" value="1"/>
</dbReference>
<accession>B9DME0</accession>
<sequence>MTKFIFVTGGVVSSLGKGITAASLGRLLKDRGLSVTIQKFDPYLNVDPGTMSPYQHGEVFVTDDGAETDLDLGHYERFIDINLNKYSNVTAGKVYSHVLKKERRGDYLGGTVQVIPHITNEIKERLLLAGESTNADVVITEIGGTTGDIESLPFIEAIRQIRSDLSRENVMYIHCTLLPFIKAAGEMKTKPTQHSVKELRGLGIQPDLIVVRTEYEMTQDLKDKIALFCDIPEQNVIECRDAESLYEIPLQLSKQHMDDLVIKRLDLNAKYDTQLDEWKHLLDVVNHLDGEITIGLVGKYVSLQDAYLSVVEALKHAGYPLHKDINVKWIDSSEVTDENAAEFLKDVDGILVPGGFGYRASEGKISAIRYARENNVPYFGICLGMQLATVEFARNVLGLEGAHSAELDPETPYPVIDLLPEQKDIEDLGGTLRLGLYPSEVKEGTLAYDIYGKKEIEERHRHRYEFNNDYREQMEDNGLVFSGVSPDGRRIEMVELPKNDFFFACQFHPEFLSRPNRPQPIFKAFIEAANKYKEAKENK</sequence>
<evidence type="ECO:0000255" key="1">
    <source>
        <dbReference type="HAMAP-Rule" id="MF_01227"/>
    </source>
</evidence>
<keyword id="KW-0067">ATP-binding</keyword>
<keyword id="KW-0315">Glutamine amidotransferase</keyword>
<keyword id="KW-0436">Ligase</keyword>
<keyword id="KW-0460">Magnesium</keyword>
<keyword id="KW-0479">Metal-binding</keyword>
<keyword id="KW-0547">Nucleotide-binding</keyword>
<keyword id="KW-0665">Pyrimidine biosynthesis</keyword>
<keyword id="KW-1185">Reference proteome</keyword>
<reference key="1">
    <citation type="journal article" date="2009" name="Appl. Environ. Microbiol.">
        <title>Genome analysis of the meat starter culture bacterium Staphylococcus carnosus TM300.</title>
        <authorList>
            <person name="Rosenstein R."/>
            <person name="Nerz C."/>
            <person name="Biswas L."/>
            <person name="Resch A."/>
            <person name="Raddatz G."/>
            <person name="Schuster S.C."/>
            <person name="Goetz F."/>
        </authorList>
    </citation>
    <scope>NUCLEOTIDE SEQUENCE [LARGE SCALE GENOMIC DNA]</scope>
    <source>
        <strain>TM300</strain>
    </source>
</reference>
<proteinExistence type="inferred from homology"/>
<comment type="function">
    <text evidence="1">Catalyzes the ATP-dependent amination of UTP to CTP with either L-glutamine or ammonia as the source of nitrogen. Regulates intracellular CTP levels through interactions with the four ribonucleotide triphosphates.</text>
</comment>
<comment type="catalytic activity">
    <reaction evidence="1">
        <text>UTP + L-glutamine + ATP + H2O = CTP + L-glutamate + ADP + phosphate + 2 H(+)</text>
        <dbReference type="Rhea" id="RHEA:26426"/>
        <dbReference type="ChEBI" id="CHEBI:15377"/>
        <dbReference type="ChEBI" id="CHEBI:15378"/>
        <dbReference type="ChEBI" id="CHEBI:29985"/>
        <dbReference type="ChEBI" id="CHEBI:30616"/>
        <dbReference type="ChEBI" id="CHEBI:37563"/>
        <dbReference type="ChEBI" id="CHEBI:43474"/>
        <dbReference type="ChEBI" id="CHEBI:46398"/>
        <dbReference type="ChEBI" id="CHEBI:58359"/>
        <dbReference type="ChEBI" id="CHEBI:456216"/>
        <dbReference type="EC" id="6.3.4.2"/>
    </reaction>
</comment>
<comment type="catalytic activity">
    <reaction evidence="1">
        <text>L-glutamine + H2O = L-glutamate + NH4(+)</text>
        <dbReference type="Rhea" id="RHEA:15889"/>
        <dbReference type="ChEBI" id="CHEBI:15377"/>
        <dbReference type="ChEBI" id="CHEBI:28938"/>
        <dbReference type="ChEBI" id="CHEBI:29985"/>
        <dbReference type="ChEBI" id="CHEBI:58359"/>
    </reaction>
</comment>
<comment type="catalytic activity">
    <reaction evidence="1">
        <text>UTP + NH4(+) + ATP = CTP + ADP + phosphate + 2 H(+)</text>
        <dbReference type="Rhea" id="RHEA:16597"/>
        <dbReference type="ChEBI" id="CHEBI:15378"/>
        <dbReference type="ChEBI" id="CHEBI:28938"/>
        <dbReference type="ChEBI" id="CHEBI:30616"/>
        <dbReference type="ChEBI" id="CHEBI:37563"/>
        <dbReference type="ChEBI" id="CHEBI:43474"/>
        <dbReference type="ChEBI" id="CHEBI:46398"/>
        <dbReference type="ChEBI" id="CHEBI:456216"/>
    </reaction>
</comment>
<comment type="activity regulation">
    <text evidence="1">Allosterically activated by GTP, when glutamine is the substrate; GTP has no effect on the reaction when ammonia is the substrate. The allosteric effector GTP functions by stabilizing the protein conformation that binds the tetrahedral intermediate(s) formed during glutamine hydrolysis. Inhibited by the product CTP, via allosteric rather than competitive inhibition.</text>
</comment>
<comment type="pathway">
    <text evidence="1">Pyrimidine metabolism; CTP biosynthesis via de novo pathway; CTP from UDP: step 2/2.</text>
</comment>
<comment type="subunit">
    <text evidence="1">Homotetramer.</text>
</comment>
<comment type="miscellaneous">
    <text evidence="1">CTPSs have evolved a hybrid strategy for distinguishing between UTP and CTP. The overlapping regions of the product feedback inhibitory and substrate sites recognize a common feature in both compounds, the triphosphate moiety. To differentiate isosteric substrate and product pyrimidine rings, an additional pocket far from the expected kinase/ligase catalytic site, specifically recognizes the cytosine and ribose portions of the product inhibitor.</text>
</comment>
<comment type="similarity">
    <text evidence="1">Belongs to the CTP synthase family.</text>
</comment>
<feature type="chain" id="PRO_1000164960" description="CTP synthase">
    <location>
        <begin position="1"/>
        <end position="539"/>
    </location>
</feature>
<feature type="domain" description="Glutamine amidotransferase type-1" evidence="1">
    <location>
        <begin position="293"/>
        <end position="535"/>
    </location>
</feature>
<feature type="region of interest" description="Amidoligase domain" evidence="1">
    <location>
        <begin position="1"/>
        <end position="267"/>
    </location>
</feature>
<feature type="active site" description="Nucleophile; for glutamine hydrolysis" evidence="1">
    <location>
        <position position="382"/>
    </location>
</feature>
<feature type="active site" evidence="1">
    <location>
        <position position="508"/>
    </location>
</feature>
<feature type="active site" evidence="1">
    <location>
        <position position="510"/>
    </location>
</feature>
<feature type="binding site" evidence="1">
    <location>
        <position position="13"/>
    </location>
    <ligand>
        <name>CTP</name>
        <dbReference type="ChEBI" id="CHEBI:37563"/>
        <note>allosteric inhibitor</note>
    </ligand>
</feature>
<feature type="binding site" evidence="1">
    <location>
        <position position="13"/>
    </location>
    <ligand>
        <name>UTP</name>
        <dbReference type="ChEBI" id="CHEBI:46398"/>
    </ligand>
</feature>
<feature type="binding site" evidence="1">
    <location>
        <begin position="14"/>
        <end position="19"/>
    </location>
    <ligand>
        <name>ATP</name>
        <dbReference type="ChEBI" id="CHEBI:30616"/>
    </ligand>
</feature>
<feature type="binding site" evidence="1">
    <location>
        <position position="54"/>
    </location>
    <ligand>
        <name>L-glutamine</name>
        <dbReference type="ChEBI" id="CHEBI:58359"/>
    </ligand>
</feature>
<feature type="binding site" evidence="1">
    <location>
        <position position="71"/>
    </location>
    <ligand>
        <name>ATP</name>
        <dbReference type="ChEBI" id="CHEBI:30616"/>
    </ligand>
</feature>
<feature type="binding site" evidence="1">
    <location>
        <position position="71"/>
    </location>
    <ligand>
        <name>Mg(2+)</name>
        <dbReference type="ChEBI" id="CHEBI:18420"/>
    </ligand>
</feature>
<feature type="binding site" evidence="1">
    <location>
        <position position="141"/>
    </location>
    <ligand>
        <name>Mg(2+)</name>
        <dbReference type="ChEBI" id="CHEBI:18420"/>
    </ligand>
</feature>
<feature type="binding site" evidence="1">
    <location>
        <begin position="148"/>
        <end position="150"/>
    </location>
    <ligand>
        <name>CTP</name>
        <dbReference type="ChEBI" id="CHEBI:37563"/>
        <note>allosteric inhibitor</note>
    </ligand>
</feature>
<feature type="binding site" evidence="1">
    <location>
        <begin position="188"/>
        <end position="193"/>
    </location>
    <ligand>
        <name>CTP</name>
        <dbReference type="ChEBI" id="CHEBI:37563"/>
        <note>allosteric inhibitor</note>
    </ligand>
</feature>
<feature type="binding site" evidence="1">
    <location>
        <begin position="188"/>
        <end position="193"/>
    </location>
    <ligand>
        <name>UTP</name>
        <dbReference type="ChEBI" id="CHEBI:46398"/>
    </ligand>
</feature>
<feature type="binding site" evidence="1">
    <location>
        <position position="224"/>
    </location>
    <ligand>
        <name>CTP</name>
        <dbReference type="ChEBI" id="CHEBI:37563"/>
        <note>allosteric inhibitor</note>
    </ligand>
</feature>
<feature type="binding site" evidence="1">
    <location>
        <position position="224"/>
    </location>
    <ligand>
        <name>UTP</name>
        <dbReference type="ChEBI" id="CHEBI:46398"/>
    </ligand>
</feature>
<feature type="binding site" evidence="1">
    <location>
        <begin position="240"/>
        <end position="242"/>
    </location>
    <ligand>
        <name>ATP</name>
        <dbReference type="ChEBI" id="CHEBI:30616"/>
    </ligand>
</feature>
<feature type="binding site" evidence="1">
    <location>
        <position position="355"/>
    </location>
    <ligand>
        <name>L-glutamine</name>
        <dbReference type="ChEBI" id="CHEBI:58359"/>
    </ligand>
</feature>
<feature type="binding site" evidence="1">
    <location>
        <begin position="383"/>
        <end position="386"/>
    </location>
    <ligand>
        <name>L-glutamine</name>
        <dbReference type="ChEBI" id="CHEBI:58359"/>
    </ligand>
</feature>
<feature type="binding site" evidence="1">
    <location>
        <position position="406"/>
    </location>
    <ligand>
        <name>L-glutamine</name>
        <dbReference type="ChEBI" id="CHEBI:58359"/>
    </ligand>
</feature>
<feature type="binding site" evidence="1">
    <location>
        <position position="463"/>
    </location>
    <ligand>
        <name>L-glutamine</name>
        <dbReference type="ChEBI" id="CHEBI:58359"/>
    </ligand>
</feature>
<gene>
    <name evidence="1" type="primary">pyrG</name>
    <name type="ordered locus">Sca_1630</name>
</gene>
<name>PYRG_STACT</name>